<accession>Q6N0L9</accession>
<organism>
    <name type="scientific">Rhodopseudomonas palustris (strain ATCC BAA-98 / CGA009)</name>
    <dbReference type="NCBI Taxonomy" id="258594"/>
    <lineage>
        <taxon>Bacteria</taxon>
        <taxon>Pseudomonadati</taxon>
        <taxon>Pseudomonadota</taxon>
        <taxon>Alphaproteobacteria</taxon>
        <taxon>Hyphomicrobiales</taxon>
        <taxon>Nitrobacteraceae</taxon>
        <taxon>Rhodopseudomonas</taxon>
    </lineage>
</organism>
<sequence>MSNKMWGGRFTDRPDAIMEEINVSIDVDRHLYAQDITASKAHAAMLAAQGIITANDAKNIGKGLDTILSEITAGKFTFKRALEDIHMNVESRLAELIGPAAGRLHTARSRNDQVATDFRLYVRDVLDETDAALAALQQALAERALEQADTVMPGFTHLQTAQPVTFGHHLMAYVEMVARDRGRFQDARKRLNESPLGAAALAGTSFPIDRHATAAKLGFDRPMANSLDAVSDRDFVLETLSAASICAVHLSRFAEEIVIWTSPLVGLIRLSDKFTTGSSIMPQKRNPDAAELVRAKTGRVIGALNGLLIVMKGLPLAYQKDMQEDKQGAMEGFAALSLAIRAITGMVRDLEPEPERMKLAAGEGYATATDLADWLVRTLKMPFREAHHVTGRIVGLAAKKGVALHELPLAEMQSVEKRITKDVLAVLSVESSVKSRTSYGGTAPKNVRSQAKAWLKRLAKDTKTR</sequence>
<proteinExistence type="inferred from homology"/>
<reference key="1">
    <citation type="journal article" date="2004" name="Nat. Biotechnol.">
        <title>Complete genome sequence of the metabolically versatile photosynthetic bacterium Rhodopseudomonas palustris.</title>
        <authorList>
            <person name="Larimer F.W."/>
            <person name="Chain P."/>
            <person name="Hauser L."/>
            <person name="Lamerdin J.E."/>
            <person name="Malfatti S."/>
            <person name="Do L."/>
            <person name="Land M.L."/>
            <person name="Pelletier D.A."/>
            <person name="Beatty J.T."/>
            <person name="Lang A.S."/>
            <person name="Tabita F.R."/>
            <person name="Gibson J.L."/>
            <person name="Hanson T.E."/>
            <person name="Bobst C."/>
            <person name="Torres y Torres J.L."/>
            <person name="Peres C."/>
            <person name="Harrison F.H."/>
            <person name="Gibson J."/>
            <person name="Harwood C.S."/>
        </authorList>
    </citation>
    <scope>NUCLEOTIDE SEQUENCE [LARGE SCALE GENOMIC DNA]</scope>
    <source>
        <strain>ATCC BAA-98 / CGA009</strain>
    </source>
</reference>
<dbReference type="EC" id="4.3.2.1" evidence="1"/>
<dbReference type="EMBL" id="BX572608">
    <property type="protein sequence ID" value="CAE30183.1"/>
    <property type="molecule type" value="Genomic_DNA"/>
</dbReference>
<dbReference type="RefSeq" id="WP_011160275.1">
    <property type="nucleotide sequence ID" value="NZ_CP116810.1"/>
</dbReference>
<dbReference type="SMR" id="Q6N0L9"/>
<dbReference type="STRING" id="258594.RPA4743"/>
<dbReference type="GeneID" id="66895902"/>
<dbReference type="eggNOG" id="COG0165">
    <property type="taxonomic scope" value="Bacteria"/>
</dbReference>
<dbReference type="HOGENOM" id="CLU_027272_2_3_5"/>
<dbReference type="PhylomeDB" id="Q6N0L9"/>
<dbReference type="UniPathway" id="UPA00068">
    <property type="reaction ID" value="UER00114"/>
</dbReference>
<dbReference type="GO" id="GO:0005829">
    <property type="term" value="C:cytosol"/>
    <property type="evidence" value="ECO:0007669"/>
    <property type="project" value="TreeGrafter"/>
</dbReference>
<dbReference type="GO" id="GO:0004056">
    <property type="term" value="F:argininosuccinate lyase activity"/>
    <property type="evidence" value="ECO:0007669"/>
    <property type="project" value="UniProtKB-UniRule"/>
</dbReference>
<dbReference type="GO" id="GO:0042450">
    <property type="term" value="P:arginine biosynthetic process via ornithine"/>
    <property type="evidence" value="ECO:0007669"/>
    <property type="project" value="InterPro"/>
</dbReference>
<dbReference type="GO" id="GO:0006526">
    <property type="term" value="P:L-arginine biosynthetic process"/>
    <property type="evidence" value="ECO:0007669"/>
    <property type="project" value="UniProtKB-UniRule"/>
</dbReference>
<dbReference type="CDD" id="cd01359">
    <property type="entry name" value="Argininosuccinate_lyase"/>
    <property type="match status" value="1"/>
</dbReference>
<dbReference type="FunFam" id="1.10.275.10:FF:000002">
    <property type="entry name" value="Argininosuccinate lyase"/>
    <property type="match status" value="1"/>
</dbReference>
<dbReference type="FunFam" id="1.10.40.30:FF:000001">
    <property type="entry name" value="Argininosuccinate lyase"/>
    <property type="match status" value="1"/>
</dbReference>
<dbReference type="FunFam" id="1.20.200.10:FF:000015">
    <property type="entry name" value="argininosuccinate lyase isoform X2"/>
    <property type="match status" value="1"/>
</dbReference>
<dbReference type="Gene3D" id="1.10.40.30">
    <property type="entry name" value="Fumarase/aspartase (C-terminal domain)"/>
    <property type="match status" value="1"/>
</dbReference>
<dbReference type="Gene3D" id="1.20.200.10">
    <property type="entry name" value="Fumarase/aspartase (Central domain)"/>
    <property type="match status" value="1"/>
</dbReference>
<dbReference type="Gene3D" id="1.10.275.10">
    <property type="entry name" value="Fumarase/aspartase (N-terminal domain)"/>
    <property type="match status" value="1"/>
</dbReference>
<dbReference type="HAMAP" id="MF_00006">
    <property type="entry name" value="Arg_succ_lyase"/>
    <property type="match status" value="1"/>
</dbReference>
<dbReference type="InterPro" id="IPR029419">
    <property type="entry name" value="Arg_succ_lyase_C"/>
</dbReference>
<dbReference type="InterPro" id="IPR009049">
    <property type="entry name" value="Argininosuccinate_lyase"/>
</dbReference>
<dbReference type="InterPro" id="IPR024083">
    <property type="entry name" value="Fumarase/histidase_N"/>
</dbReference>
<dbReference type="InterPro" id="IPR020557">
    <property type="entry name" value="Fumarate_lyase_CS"/>
</dbReference>
<dbReference type="InterPro" id="IPR000362">
    <property type="entry name" value="Fumarate_lyase_fam"/>
</dbReference>
<dbReference type="InterPro" id="IPR022761">
    <property type="entry name" value="Fumarate_lyase_N"/>
</dbReference>
<dbReference type="InterPro" id="IPR008948">
    <property type="entry name" value="L-Aspartase-like"/>
</dbReference>
<dbReference type="NCBIfam" id="TIGR00838">
    <property type="entry name" value="argH"/>
    <property type="match status" value="1"/>
</dbReference>
<dbReference type="PANTHER" id="PTHR43814">
    <property type="entry name" value="ARGININOSUCCINATE LYASE"/>
    <property type="match status" value="1"/>
</dbReference>
<dbReference type="PANTHER" id="PTHR43814:SF1">
    <property type="entry name" value="ARGININOSUCCINATE LYASE"/>
    <property type="match status" value="1"/>
</dbReference>
<dbReference type="Pfam" id="PF14698">
    <property type="entry name" value="ASL_C2"/>
    <property type="match status" value="1"/>
</dbReference>
<dbReference type="Pfam" id="PF00206">
    <property type="entry name" value="Lyase_1"/>
    <property type="match status" value="1"/>
</dbReference>
<dbReference type="PRINTS" id="PR00145">
    <property type="entry name" value="ARGSUCLYASE"/>
</dbReference>
<dbReference type="PRINTS" id="PR00149">
    <property type="entry name" value="FUMRATELYASE"/>
</dbReference>
<dbReference type="SUPFAM" id="SSF48557">
    <property type="entry name" value="L-aspartase-like"/>
    <property type="match status" value="1"/>
</dbReference>
<dbReference type="PROSITE" id="PS00163">
    <property type="entry name" value="FUMARATE_LYASES"/>
    <property type="match status" value="1"/>
</dbReference>
<feature type="chain" id="PRO_0000137816" description="Argininosuccinate lyase">
    <location>
        <begin position="1"/>
        <end position="465"/>
    </location>
</feature>
<protein>
    <recommendedName>
        <fullName evidence="1">Argininosuccinate lyase</fullName>
        <shortName evidence="1">ASAL</shortName>
        <ecNumber evidence="1">4.3.2.1</ecNumber>
    </recommendedName>
    <alternativeName>
        <fullName evidence="1">Arginosuccinase</fullName>
    </alternativeName>
</protein>
<comment type="catalytic activity">
    <reaction evidence="1">
        <text>2-(N(omega)-L-arginino)succinate = fumarate + L-arginine</text>
        <dbReference type="Rhea" id="RHEA:24020"/>
        <dbReference type="ChEBI" id="CHEBI:29806"/>
        <dbReference type="ChEBI" id="CHEBI:32682"/>
        <dbReference type="ChEBI" id="CHEBI:57472"/>
        <dbReference type="EC" id="4.3.2.1"/>
    </reaction>
</comment>
<comment type="pathway">
    <text evidence="1">Amino-acid biosynthesis; L-arginine biosynthesis; L-arginine from L-ornithine and carbamoyl phosphate: step 3/3.</text>
</comment>
<comment type="subcellular location">
    <subcellularLocation>
        <location evidence="1">Cytoplasm</location>
    </subcellularLocation>
</comment>
<comment type="similarity">
    <text evidence="1">Belongs to the lyase 1 family. Argininosuccinate lyase subfamily.</text>
</comment>
<name>ARLY_RHOPA</name>
<keyword id="KW-0028">Amino-acid biosynthesis</keyword>
<keyword id="KW-0055">Arginine biosynthesis</keyword>
<keyword id="KW-0963">Cytoplasm</keyword>
<keyword id="KW-0456">Lyase</keyword>
<evidence type="ECO:0000255" key="1">
    <source>
        <dbReference type="HAMAP-Rule" id="MF_00006"/>
    </source>
</evidence>
<gene>
    <name evidence="1" type="primary">argH</name>
    <name type="ordered locus">RPA4743</name>
</gene>